<keyword id="KW-0028">Amino-acid biosynthesis</keyword>
<keyword id="KW-0055">Arginine biosynthesis</keyword>
<keyword id="KW-0067">ATP-binding</keyword>
<keyword id="KW-0963">Cytoplasm</keyword>
<keyword id="KW-0436">Ligase</keyword>
<keyword id="KW-0547">Nucleotide-binding</keyword>
<comment type="catalytic activity">
    <reaction evidence="1">
        <text>L-citrulline + L-aspartate + ATP = 2-(N(omega)-L-arginino)succinate + AMP + diphosphate + H(+)</text>
        <dbReference type="Rhea" id="RHEA:10932"/>
        <dbReference type="ChEBI" id="CHEBI:15378"/>
        <dbReference type="ChEBI" id="CHEBI:29991"/>
        <dbReference type="ChEBI" id="CHEBI:30616"/>
        <dbReference type="ChEBI" id="CHEBI:33019"/>
        <dbReference type="ChEBI" id="CHEBI:57472"/>
        <dbReference type="ChEBI" id="CHEBI:57743"/>
        <dbReference type="ChEBI" id="CHEBI:456215"/>
        <dbReference type="EC" id="6.3.4.5"/>
    </reaction>
</comment>
<comment type="pathway">
    <text evidence="1">Amino-acid biosynthesis; L-arginine biosynthesis; L-arginine from L-ornithine and carbamoyl phosphate: step 2/3.</text>
</comment>
<comment type="subunit">
    <text evidence="1">Homotetramer.</text>
</comment>
<comment type="subcellular location">
    <subcellularLocation>
        <location evidence="1">Cytoplasm</location>
    </subcellularLocation>
</comment>
<comment type="similarity">
    <text evidence="1">Belongs to the argininosuccinate synthase family. Type 1 subfamily.</text>
</comment>
<evidence type="ECO:0000255" key="1">
    <source>
        <dbReference type="HAMAP-Rule" id="MF_00005"/>
    </source>
</evidence>
<gene>
    <name evidence="1" type="primary">argG</name>
    <name type="ordered locus">TT_C1701</name>
</gene>
<proteinExistence type="inferred from homology"/>
<feature type="chain" id="PRO_0000148657" description="Argininosuccinate synthase">
    <location>
        <begin position="1"/>
        <end position="400"/>
    </location>
</feature>
<feature type="binding site" evidence="1">
    <location>
        <begin position="6"/>
        <end position="14"/>
    </location>
    <ligand>
        <name>ATP</name>
        <dbReference type="ChEBI" id="CHEBI:30616"/>
    </ligand>
</feature>
<feature type="binding site" evidence="1">
    <location>
        <position position="33"/>
    </location>
    <ligand>
        <name>ATP</name>
        <dbReference type="ChEBI" id="CHEBI:30616"/>
    </ligand>
</feature>
<feature type="binding site" evidence="1">
    <location>
        <position position="84"/>
    </location>
    <ligand>
        <name>L-citrulline</name>
        <dbReference type="ChEBI" id="CHEBI:57743"/>
    </ligand>
</feature>
<feature type="binding site" evidence="1">
    <location>
        <position position="89"/>
    </location>
    <ligand>
        <name>L-citrulline</name>
        <dbReference type="ChEBI" id="CHEBI:57743"/>
    </ligand>
</feature>
<feature type="binding site" evidence="1">
    <location>
        <position position="114"/>
    </location>
    <ligand>
        <name>ATP</name>
        <dbReference type="ChEBI" id="CHEBI:30616"/>
    </ligand>
</feature>
<feature type="binding site" evidence="1">
    <location>
        <position position="116"/>
    </location>
    <ligand>
        <name>L-aspartate</name>
        <dbReference type="ChEBI" id="CHEBI:29991"/>
    </ligand>
</feature>
<feature type="binding site" evidence="1">
    <location>
        <position position="120"/>
    </location>
    <ligand>
        <name>L-aspartate</name>
        <dbReference type="ChEBI" id="CHEBI:29991"/>
    </ligand>
</feature>
<feature type="binding site" evidence="1">
    <location>
        <position position="120"/>
    </location>
    <ligand>
        <name>L-citrulline</name>
        <dbReference type="ChEBI" id="CHEBI:57743"/>
    </ligand>
</feature>
<feature type="binding site" evidence="1">
    <location>
        <position position="121"/>
    </location>
    <ligand>
        <name>L-aspartate</name>
        <dbReference type="ChEBI" id="CHEBI:29991"/>
    </ligand>
</feature>
<feature type="binding site" evidence="1">
    <location>
        <position position="124"/>
    </location>
    <ligand>
        <name>L-citrulline</name>
        <dbReference type="ChEBI" id="CHEBI:57743"/>
    </ligand>
</feature>
<feature type="binding site" evidence="1">
    <location>
        <position position="173"/>
    </location>
    <ligand>
        <name>L-citrulline</name>
        <dbReference type="ChEBI" id="CHEBI:57743"/>
    </ligand>
</feature>
<feature type="binding site" evidence="1">
    <location>
        <position position="182"/>
    </location>
    <ligand>
        <name>L-citrulline</name>
        <dbReference type="ChEBI" id="CHEBI:57743"/>
    </ligand>
</feature>
<feature type="binding site" evidence="1">
    <location>
        <position position="258"/>
    </location>
    <ligand>
        <name>L-citrulline</name>
        <dbReference type="ChEBI" id="CHEBI:57743"/>
    </ligand>
</feature>
<feature type="binding site" evidence="1">
    <location>
        <position position="270"/>
    </location>
    <ligand>
        <name>L-citrulline</name>
        <dbReference type="ChEBI" id="CHEBI:57743"/>
    </ligand>
</feature>
<protein>
    <recommendedName>
        <fullName evidence="1">Argininosuccinate synthase</fullName>
        <ecNumber evidence="1">6.3.4.5</ecNumber>
    </recommendedName>
    <alternativeName>
        <fullName evidence="1">Citrulline--aspartate ligase</fullName>
    </alternativeName>
</protein>
<name>ASSY_THET2</name>
<organism>
    <name type="scientific">Thermus thermophilus (strain ATCC BAA-163 / DSM 7039 / HB27)</name>
    <dbReference type="NCBI Taxonomy" id="262724"/>
    <lineage>
        <taxon>Bacteria</taxon>
        <taxon>Thermotogati</taxon>
        <taxon>Deinococcota</taxon>
        <taxon>Deinococci</taxon>
        <taxon>Thermales</taxon>
        <taxon>Thermaceae</taxon>
        <taxon>Thermus</taxon>
    </lineage>
</organism>
<dbReference type="EC" id="6.3.4.5" evidence="1"/>
<dbReference type="EMBL" id="AE017221">
    <property type="protein sequence ID" value="AAS82043.1"/>
    <property type="molecule type" value="Genomic_DNA"/>
</dbReference>
<dbReference type="RefSeq" id="WP_011174064.1">
    <property type="nucleotide sequence ID" value="NC_005835.1"/>
</dbReference>
<dbReference type="SMR" id="P61526"/>
<dbReference type="KEGG" id="tth:TT_C1701"/>
<dbReference type="eggNOG" id="COG0137">
    <property type="taxonomic scope" value="Bacteria"/>
</dbReference>
<dbReference type="HOGENOM" id="CLU_032784_4_2_0"/>
<dbReference type="OrthoDB" id="9801641at2"/>
<dbReference type="UniPathway" id="UPA00068">
    <property type="reaction ID" value="UER00113"/>
</dbReference>
<dbReference type="Proteomes" id="UP000000592">
    <property type="component" value="Chromosome"/>
</dbReference>
<dbReference type="GO" id="GO:0005737">
    <property type="term" value="C:cytoplasm"/>
    <property type="evidence" value="ECO:0007669"/>
    <property type="project" value="UniProtKB-SubCell"/>
</dbReference>
<dbReference type="GO" id="GO:0004055">
    <property type="term" value="F:argininosuccinate synthase activity"/>
    <property type="evidence" value="ECO:0007669"/>
    <property type="project" value="UniProtKB-UniRule"/>
</dbReference>
<dbReference type="GO" id="GO:0005524">
    <property type="term" value="F:ATP binding"/>
    <property type="evidence" value="ECO:0007669"/>
    <property type="project" value="UniProtKB-UniRule"/>
</dbReference>
<dbReference type="GO" id="GO:0000053">
    <property type="term" value="P:argininosuccinate metabolic process"/>
    <property type="evidence" value="ECO:0007669"/>
    <property type="project" value="TreeGrafter"/>
</dbReference>
<dbReference type="GO" id="GO:0006526">
    <property type="term" value="P:L-arginine biosynthetic process"/>
    <property type="evidence" value="ECO:0007669"/>
    <property type="project" value="UniProtKB-UniRule"/>
</dbReference>
<dbReference type="GO" id="GO:0000050">
    <property type="term" value="P:urea cycle"/>
    <property type="evidence" value="ECO:0007669"/>
    <property type="project" value="TreeGrafter"/>
</dbReference>
<dbReference type="CDD" id="cd01999">
    <property type="entry name" value="ASS"/>
    <property type="match status" value="1"/>
</dbReference>
<dbReference type="FunFam" id="3.40.50.620:FF:000019">
    <property type="entry name" value="Argininosuccinate synthase"/>
    <property type="match status" value="1"/>
</dbReference>
<dbReference type="FunFam" id="3.90.1260.10:FF:000007">
    <property type="entry name" value="Argininosuccinate synthase"/>
    <property type="match status" value="1"/>
</dbReference>
<dbReference type="Gene3D" id="3.90.1260.10">
    <property type="entry name" value="Argininosuccinate synthetase, chain A, domain 2"/>
    <property type="match status" value="1"/>
</dbReference>
<dbReference type="Gene3D" id="3.40.50.620">
    <property type="entry name" value="HUPs"/>
    <property type="match status" value="1"/>
</dbReference>
<dbReference type="Gene3D" id="1.20.5.470">
    <property type="entry name" value="Single helix bin"/>
    <property type="match status" value="1"/>
</dbReference>
<dbReference type="HAMAP" id="MF_00005">
    <property type="entry name" value="Arg_succ_synth_type1"/>
    <property type="match status" value="1"/>
</dbReference>
<dbReference type="InterPro" id="IPR048268">
    <property type="entry name" value="Arginosuc_syn_C"/>
</dbReference>
<dbReference type="InterPro" id="IPR048267">
    <property type="entry name" value="Arginosuc_syn_N"/>
</dbReference>
<dbReference type="InterPro" id="IPR001518">
    <property type="entry name" value="Arginosuc_synth"/>
</dbReference>
<dbReference type="InterPro" id="IPR018223">
    <property type="entry name" value="Arginosuc_synth_CS"/>
</dbReference>
<dbReference type="InterPro" id="IPR023434">
    <property type="entry name" value="Arginosuc_synth_type_1_subfam"/>
</dbReference>
<dbReference type="InterPro" id="IPR024074">
    <property type="entry name" value="AS_cat/multimer_dom_body"/>
</dbReference>
<dbReference type="InterPro" id="IPR014729">
    <property type="entry name" value="Rossmann-like_a/b/a_fold"/>
</dbReference>
<dbReference type="NCBIfam" id="TIGR00032">
    <property type="entry name" value="argG"/>
    <property type="match status" value="1"/>
</dbReference>
<dbReference type="NCBIfam" id="NF001770">
    <property type="entry name" value="PRK00509.1"/>
    <property type="match status" value="1"/>
</dbReference>
<dbReference type="PANTHER" id="PTHR11587">
    <property type="entry name" value="ARGININOSUCCINATE SYNTHASE"/>
    <property type="match status" value="1"/>
</dbReference>
<dbReference type="PANTHER" id="PTHR11587:SF2">
    <property type="entry name" value="ARGININOSUCCINATE SYNTHASE"/>
    <property type="match status" value="1"/>
</dbReference>
<dbReference type="Pfam" id="PF20979">
    <property type="entry name" value="Arginosuc_syn_C"/>
    <property type="match status" value="1"/>
</dbReference>
<dbReference type="Pfam" id="PF00764">
    <property type="entry name" value="Arginosuc_synth"/>
    <property type="match status" value="1"/>
</dbReference>
<dbReference type="SUPFAM" id="SSF52402">
    <property type="entry name" value="Adenine nucleotide alpha hydrolases-like"/>
    <property type="match status" value="1"/>
</dbReference>
<dbReference type="SUPFAM" id="SSF69864">
    <property type="entry name" value="Argininosuccinate synthetase, C-terminal domain"/>
    <property type="match status" value="1"/>
</dbReference>
<dbReference type="PROSITE" id="PS00564">
    <property type="entry name" value="ARGININOSUCCIN_SYN_1"/>
    <property type="match status" value="1"/>
</dbReference>
<dbReference type="PROSITE" id="PS00565">
    <property type="entry name" value="ARGININOSUCCIN_SYN_2"/>
    <property type="match status" value="1"/>
</dbReference>
<reference key="1">
    <citation type="journal article" date="2004" name="Nat. Biotechnol.">
        <title>The genome sequence of the extreme thermophile Thermus thermophilus.</title>
        <authorList>
            <person name="Henne A."/>
            <person name="Brueggemann H."/>
            <person name="Raasch C."/>
            <person name="Wiezer A."/>
            <person name="Hartsch T."/>
            <person name="Liesegang H."/>
            <person name="Johann A."/>
            <person name="Lienard T."/>
            <person name="Gohl O."/>
            <person name="Martinez-Arias R."/>
            <person name="Jacobi C."/>
            <person name="Starkuviene V."/>
            <person name="Schlenczeck S."/>
            <person name="Dencker S."/>
            <person name="Huber R."/>
            <person name="Klenk H.-P."/>
            <person name="Kramer W."/>
            <person name="Merkl R."/>
            <person name="Gottschalk G."/>
            <person name="Fritz H.-J."/>
        </authorList>
    </citation>
    <scope>NUCLEOTIDE SEQUENCE [LARGE SCALE GENOMIC DNA]</scope>
    <source>
        <strain>ATCC BAA-163 / DSM 7039 / HB27</strain>
    </source>
</reference>
<sequence>MKIVLAYSGGLDTSIILKWLKETYGAEVIAFTADIGQGEEVEEAREKALRTGASKAIALDLKEEFVRDFVFPMMRAGAVYEGYYLLGTSIARPLIAKHLVRIAEEEGAEAIAHGATGKGNDQVRFELTAYALKPDIKVIAPWREWSFQGRKEMIAYAEAHGIPVPVTQEKPYSMDANLLHISYEGGVLEDPWAEPPKGMFRMTQDPEEAPDAPEYVEVEFFEGDPVAVNGERLSPAALLQRLNELGGRHGVGRVDIVENRFVGMKSRGVYETPGGTILYHARRAVESLTLDREVLHQRDMLSPKYAELVYYGFWYAPEREALQAYFDHVAKNVTGVARLKLYKGNVYVVGRKAPKSLYRQDLVSFDEAGGYDQKDAEGFIKIQALRLRVRALVEREGHGA</sequence>
<accession>P61526</accession>